<dbReference type="EMBL" id="CP001391">
    <property type="protein sequence ID" value="ACN95246.1"/>
    <property type="molecule type" value="Genomic_DNA"/>
</dbReference>
<dbReference type="SMR" id="C0R2V4"/>
<dbReference type="STRING" id="66084.WRi_004600"/>
<dbReference type="KEGG" id="wri:WRi_004600"/>
<dbReference type="HOGENOM" id="CLU_132825_1_0_5"/>
<dbReference type="Proteomes" id="UP000001293">
    <property type="component" value="Chromosome"/>
</dbReference>
<dbReference type="GO" id="GO:0005737">
    <property type="term" value="C:cytoplasm"/>
    <property type="evidence" value="ECO:0007669"/>
    <property type="project" value="UniProtKB-SubCell"/>
</dbReference>
<dbReference type="GO" id="GO:0005524">
    <property type="term" value="F:ATP binding"/>
    <property type="evidence" value="ECO:0007669"/>
    <property type="project" value="InterPro"/>
</dbReference>
<dbReference type="GO" id="GO:0046872">
    <property type="term" value="F:metal ion binding"/>
    <property type="evidence" value="ECO:0007669"/>
    <property type="project" value="TreeGrafter"/>
</dbReference>
<dbReference type="GO" id="GO:0044183">
    <property type="term" value="F:protein folding chaperone"/>
    <property type="evidence" value="ECO:0007669"/>
    <property type="project" value="InterPro"/>
</dbReference>
<dbReference type="GO" id="GO:0051087">
    <property type="term" value="F:protein-folding chaperone binding"/>
    <property type="evidence" value="ECO:0007669"/>
    <property type="project" value="TreeGrafter"/>
</dbReference>
<dbReference type="GO" id="GO:0051082">
    <property type="term" value="F:unfolded protein binding"/>
    <property type="evidence" value="ECO:0007669"/>
    <property type="project" value="TreeGrafter"/>
</dbReference>
<dbReference type="GO" id="GO:0051085">
    <property type="term" value="P:chaperone cofactor-dependent protein refolding"/>
    <property type="evidence" value="ECO:0007669"/>
    <property type="project" value="TreeGrafter"/>
</dbReference>
<dbReference type="CDD" id="cd00320">
    <property type="entry name" value="cpn10"/>
    <property type="match status" value="1"/>
</dbReference>
<dbReference type="FunFam" id="2.30.33.40:FF:000001">
    <property type="entry name" value="10 kDa chaperonin"/>
    <property type="match status" value="1"/>
</dbReference>
<dbReference type="Gene3D" id="2.30.33.40">
    <property type="entry name" value="GroES chaperonin"/>
    <property type="match status" value="1"/>
</dbReference>
<dbReference type="HAMAP" id="MF_00580">
    <property type="entry name" value="CH10"/>
    <property type="match status" value="1"/>
</dbReference>
<dbReference type="InterPro" id="IPR020818">
    <property type="entry name" value="Chaperonin_GroES"/>
</dbReference>
<dbReference type="InterPro" id="IPR037124">
    <property type="entry name" value="Chaperonin_GroES_sf"/>
</dbReference>
<dbReference type="InterPro" id="IPR011032">
    <property type="entry name" value="GroES-like_sf"/>
</dbReference>
<dbReference type="NCBIfam" id="NF001533">
    <property type="entry name" value="PRK00364.2-4"/>
    <property type="match status" value="1"/>
</dbReference>
<dbReference type="PANTHER" id="PTHR10772">
    <property type="entry name" value="10 KDA HEAT SHOCK PROTEIN"/>
    <property type="match status" value="1"/>
</dbReference>
<dbReference type="PANTHER" id="PTHR10772:SF63">
    <property type="entry name" value="20 KDA CHAPERONIN, CHLOROPLASTIC"/>
    <property type="match status" value="1"/>
</dbReference>
<dbReference type="Pfam" id="PF00166">
    <property type="entry name" value="Cpn10"/>
    <property type="match status" value="1"/>
</dbReference>
<dbReference type="PRINTS" id="PR00297">
    <property type="entry name" value="CHAPERONIN10"/>
</dbReference>
<dbReference type="SMART" id="SM00883">
    <property type="entry name" value="Cpn10"/>
    <property type="match status" value="1"/>
</dbReference>
<dbReference type="SUPFAM" id="SSF50129">
    <property type="entry name" value="GroES-like"/>
    <property type="match status" value="1"/>
</dbReference>
<protein>
    <recommendedName>
        <fullName evidence="1">Co-chaperonin GroES</fullName>
    </recommendedName>
    <alternativeName>
        <fullName evidence="1">10 kDa chaperonin</fullName>
    </alternativeName>
    <alternativeName>
        <fullName evidence="1">Chaperonin-10</fullName>
        <shortName evidence="1">Cpn10</shortName>
    </alternativeName>
</protein>
<organism>
    <name type="scientific">Wolbachia sp. subsp. Drosophila simulans (strain wRi)</name>
    <dbReference type="NCBI Taxonomy" id="66084"/>
    <lineage>
        <taxon>Bacteria</taxon>
        <taxon>Pseudomonadati</taxon>
        <taxon>Pseudomonadota</taxon>
        <taxon>Alphaproteobacteria</taxon>
        <taxon>Rickettsiales</taxon>
        <taxon>Anaplasmataceae</taxon>
        <taxon>Wolbachieae</taxon>
        <taxon>Wolbachia</taxon>
    </lineage>
</organism>
<sequence length="96" mass="10411">MSSISLNVLDDSVLIKPISEEKQGGIVLPSSAEKKPTKGEVIAIGEGSRNSSGERVTLTVKAGDKVFYRQWAGTEIEHNDEKLIVMKESDILAVIK</sequence>
<keyword id="KW-0143">Chaperone</keyword>
<keyword id="KW-0963">Cytoplasm</keyword>
<reference key="1">
    <citation type="journal article" date="2009" name="Proc. Natl. Acad. Sci. U.S.A.">
        <title>The mosaic genome structure of the Wolbachia wRi strain infecting Drosophila simulans.</title>
        <authorList>
            <person name="Klasson L."/>
            <person name="Westberg J."/>
            <person name="Sapountzis P."/>
            <person name="Naeslund K."/>
            <person name="Lutnaes Y."/>
            <person name="Darby A.C."/>
            <person name="Veneti Z."/>
            <person name="Chen L."/>
            <person name="Braig H.R."/>
            <person name="Garrett R."/>
            <person name="Bourtzis K."/>
            <person name="Andersson S.G."/>
        </authorList>
    </citation>
    <scope>NUCLEOTIDE SEQUENCE [LARGE SCALE GENOMIC DNA]</scope>
    <source>
        <strain>wRi</strain>
    </source>
</reference>
<accession>C0R2V4</accession>
<comment type="function">
    <text evidence="1">Together with the chaperonin GroEL, plays an essential role in assisting protein folding. The GroEL-GroES system forms a nano-cage that allows encapsulation of the non-native substrate proteins and provides a physical environment optimized to promote and accelerate protein folding. GroES binds to the apical surface of the GroEL ring, thereby capping the opening of the GroEL channel.</text>
</comment>
<comment type="subunit">
    <text evidence="1">Heptamer of 7 subunits arranged in a ring. Interacts with the chaperonin GroEL.</text>
</comment>
<comment type="subcellular location">
    <subcellularLocation>
        <location evidence="1">Cytoplasm</location>
    </subcellularLocation>
</comment>
<comment type="similarity">
    <text evidence="1">Belongs to the GroES chaperonin family.</text>
</comment>
<gene>
    <name evidence="1" type="primary">groES</name>
    <name evidence="1" type="synonym">groS</name>
    <name type="ordered locus">WRi_004600</name>
</gene>
<proteinExistence type="inferred from homology"/>
<evidence type="ECO:0000255" key="1">
    <source>
        <dbReference type="HAMAP-Rule" id="MF_00580"/>
    </source>
</evidence>
<feature type="chain" id="PRO_1000146926" description="Co-chaperonin GroES">
    <location>
        <begin position="1"/>
        <end position="96"/>
    </location>
</feature>
<name>CH10_WOLWR</name>